<dbReference type="SMR" id="P56669"/>
<dbReference type="STRING" id="4577.P56669"/>
<dbReference type="PaxDb" id="4577-GRMZM2G087741_P01"/>
<dbReference type="eggNOG" id="KOG0773">
    <property type="taxonomic scope" value="Eukaryota"/>
</dbReference>
<dbReference type="InParanoid" id="P56669"/>
<dbReference type="Proteomes" id="UP000007305">
    <property type="component" value="Unplaced"/>
</dbReference>
<dbReference type="ExpressionAtlas" id="P56669">
    <property type="expression patterns" value="baseline and differential"/>
</dbReference>
<dbReference type="GO" id="GO:0005634">
    <property type="term" value="C:nucleus"/>
    <property type="evidence" value="ECO:0007669"/>
    <property type="project" value="UniProtKB-SubCell"/>
</dbReference>
<dbReference type="GO" id="GO:0003677">
    <property type="term" value="F:DNA binding"/>
    <property type="evidence" value="ECO:0007669"/>
    <property type="project" value="UniProtKB-KW"/>
</dbReference>
<dbReference type="GO" id="GO:0000981">
    <property type="term" value="F:DNA-binding transcription factor activity, RNA polymerase II-specific"/>
    <property type="evidence" value="ECO:0007669"/>
    <property type="project" value="InterPro"/>
</dbReference>
<dbReference type="CDD" id="cd00086">
    <property type="entry name" value="homeodomain"/>
    <property type="match status" value="1"/>
</dbReference>
<dbReference type="Gene3D" id="1.10.10.60">
    <property type="entry name" value="Homeodomain-like"/>
    <property type="match status" value="1"/>
</dbReference>
<dbReference type="InterPro" id="IPR005539">
    <property type="entry name" value="ELK_dom"/>
</dbReference>
<dbReference type="InterPro" id="IPR001356">
    <property type="entry name" value="HD"/>
</dbReference>
<dbReference type="InterPro" id="IPR017970">
    <property type="entry name" value="Homeobox_CS"/>
</dbReference>
<dbReference type="InterPro" id="IPR009057">
    <property type="entry name" value="Homeodomain-like_sf"/>
</dbReference>
<dbReference type="InterPro" id="IPR008422">
    <property type="entry name" value="KN_HD"/>
</dbReference>
<dbReference type="InterPro" id="IPR050224">
    <property type="entry name" value="TALE_homeobox"/>
</dbReference>
<dbReference type="PANTHER" id="PTHR11850">
    <property type="entry name" value="HOMEOBOX PROTEIN TRANSCRIPTION FACTORS"/>
    <property type="match status" value="1"/>
</dbReference>
<dbReference type="Pfam" id="PF03789">
    <property type="entry name" value="ELK"/>
    <property type="match status" value="1"/>
</dbReference>
<dbReference type="Pfam" id="PF05920">
    <property type="entry name" value="Homeobox_KN"/>
    <property type="match status" value="1"/>
</dbReference>
<dbReference type="SMART" id="SM01188">
    <property type="entry name" value="ELK"/>
    <property type="match status" value="1"/>
</dbReference>
<dbReference type="SMART" id="SM00389">
    <property type="entry name" value="HOX"/>
    <property type="match status" value="1"/>
</dbReference>
<dbReference type="SUPFAM" id="SSF46689">
    <property type="entry name" value="Homeodomain-like"/>
    <property type="match status" value="1"/>
</dbReference>
<dbReference type="PROSITE" id="PS51213">
    <property type="entry name" value="ELK"/>
    <property type="match status" value="1"/>
</dbReference>
<dbReference type="PROSITE" id="PS00027">
    <property type="entry name" value="HOMEOBOX_1"/>
    <property type="match status" value="1"/>
</dbReference>
<dbReference type="PROSITE" id="PS50071">
    <property type="entry name" value="HOMEOBOX_2"/>
    <property type="match status" value="1"/>
</dbReference>
<sequence length="85" mass="10413">ELKEMLLKKYSGCLSRLRSEFLKKRKKGKLPKDARTVLLEWWNTHYRWPYPTEEDKVRLAAMTGLDPKQINNWFINQRKRHWKPS</sequence>
<organism>
    <name type="scientific">Zea mays</name>
    <name type="common">Maize</name>
    <dbReference type="NCBI Taxonomy" id="4577"/>
    <lineage>
        <taxon>Eukaryota</taxon>
        <taxon>Viridiplantae</taxon>
        <taxon>Streptophyta</taxon>
        <taxon>Embryophyta</taxon>
        <taxon>Tracheophyta</taxon>
        <taxon>Spermatophyta</taxon>
        <taxon>Magnoliopsida</taxon>
        <taxon>Liliopsida</taxon>
        <taxon>Poales</taxon>
        <taxon>Poaceae</taxon>
        <taxon>PACMAD clade</taxon>
        <taxon>Panicoideae</taxon>
        <taxon>Andropogonodae</taxon>
        <taxon>Andropogoneae</taxon>
        <taxon>Tripsacinae</taxon>
        <taxon>Zea</taxon>
    </lineage>
</organism>
<evidence type="ECO:0000255" key="1">
    <source>
        <dbReference type="PROSITE-ProRule" id="PRU00108"/>
    </source>
</evidence>
<evidence type="ECO:0000255" key="2">
    <source>
        <dbReference type="PROSITE-ProRule" id="PRU00559"/>
    </source>
</evidence>
<evidence type="ECO:0000305" key="3"/>
<keyword id="KW-0238">DNA-binding</keyword>
<keyword id="KW-0371">Homeobox</keyword>
<keyword id="KW-0539">Nucleus</keyword>
<keyword id="KW-1185">Reference proteome</keyword>
<comment type="function">
    <text>Probably binds to the DNA sequence 5'-TGAC-3'.</text>
</comment>
<comment type="subcellular location">
    <subcellularLocation>
        <location evidence="3">Nucleus</location>
    </subcellularLocation>
</comment>
<comment type="similarity">
    <text evidence="2">Belongs to the TALE/KNOX homeobox family.</text>
</comment>
<reference key="1">
    <citation type="journal article" date="1994" name="Plant Cell">
        <title>Sequence analysis and expression patterns divide the Maize knotted1-like homeobox genes into two classes.</title>
        <authorList>
            <person name="Kerstetter R."/>
            <person name="Vollbrecht E."/>
            <person name="Lowe B."/>
            <person name="Veit B."/>
            <person name="Yamaguchi J."/>
            <person name="Hake S."/>
        </authorList>
    </citation>
    <scope>NUCLEOTIDE SEQUENCE</scope>
    <source>
        <tissue>Ear of corn</tissue>
        <tissue>Seedling</tissue>
    </source>
</reference>
<proteinExistence type="inferred from homology"/>
<protein>
    <recommendedName>
        <fullName>Homeobox protein liguleless 3</fullName>
    </recommendedName>
</protein>
<accession>P56669</accession>
<name>HLG3_MAIZE</name>
<feature type="chain" id="PRO_0000048972" description="Homeobox protein liguleless 3">
    <location>
        <begin position="1" status="less than"/>
        <end position="85" status="greater than"/>
    </location>
</feature>
<feature type="domain" description="ELK" evidence="2">
    <location>
        <begin position="1"/>
        <end position="21"/>
    </location>
</feature>
<feature type="DNA-binding region" description="Homeobox; TALE-type" evidence="1">
    <location>
        <begin position="22"/>
        <end position="85"/>
    </location>
</feature>
<feature type="non-terminal residue">
    <location>
        <position position="1"/>
    </location>
</feature>
<feature type="non-terminal residue">
    <location>
        <position position="85"/>
    </location>
</feature>
<gene>
    <name type="primary">LG3</name>
</gene>